<keyword id="KW-0028">Amino-acid biosynthesis</keyword>
<keyword id="KW-0963">Cytoplasm</keyword>
<keyword id="KW-0554">One-carbon metabolism</keyword>
<keyword id="KW-0663">Pyridoxal phosphate</keyword>
<keyword id="KW-0808">Transferase</keyword>
<protein>
    <recommendedName>
        <fullName evidence="1">Serine hydroxymethyltransferase</fullName>
        <shortName evidence="1">SHMT</shortName>
        <shortName evidence="1">Serine methylase</shortName>
        <ecNumber evidence="1">2.1.2.-</ecNumber>
    </recommendedName>
</protein>
<sequence>MLPQEVENILDVVIRHNTWRRKETINLIASENVMSPLAELVYINDLAGRYAEGIVGSRYYQGVRYVDILEDALSKKFANVLGARFVDVRPISGTIANLAAYFALVPEGGTVASLPIKYGGHISHNTVGGLKALRLKAVELPWDLENFNIDVDAARKLIEEKRPNLIILGASLYLFPHPVKEIAEVAKTVGAYVLHDSAHVFGLIVGGAFPNPLREGAHLTTASTHKTFPGPQGGVIATVLDEEKNSQIQRAVFPTFTSNYHLHRYAATYVTLVEMEVFGREYATRIVENARALAEALAAEGVPPVAERQGYTKTHQVAVDVSKFGGGDKVAALLEEANIIVNKNALPWDKSVLKPSGIRIGVQEMTRFGMGKDEMREIARFIARVLRGEDVNNIKRDVVEFRKSYLEIKYGFKISRDIVDKIFHSLNLYT</sequence>
<organism>
    <name type="scientific">Pyrobaculum islandicum (strain DSM 4184 / JCM 9189 / GEO3)</name>
    <dbReference type="NCBI Taxonomy" id="384616"/>
    <lineage>
        <taxon>Archaea</taxon>
        <taxon>Thermoproteota</taxon>
        <taxon>Thermoprotei</taxon>
        <taxon>Thermoproteales</taxon>
        <taxon>Thermoproteaceae</taxon>
        <taxon>Pyrobaculum</taxon>
    </lineage>
</organism>
<proteinExistence type="inferred from homology"/>
<reference key="1">
    <citation type="submission" date="2006-12" db="EMBL/GenBank/DDBJ databases">
        <title>Complete sequence of Pyrobaculum islandicum DSM 4184.</title>
        <authorList>
            <person name="Copeland A."/>
            <person name="Lucas S."/>
            <person name="Lapidus A."/>
            <person name="Barry K."/>
            <person name="Detter J.C."/>
            <person name="Glavina del Rio T."/>
            <person name="Dalin E."/>
            <person name="Tice H."/>
            <person name="Pitluck S."/>
            <person name="Meincke L."/>
            <person name="Brettin T."/>
            <person name="Bruce D."/>
            <person name="Han C."/>
            <person name="Tapia R."/>
            <person name="Gilna P."/>
            <person name="Schmutz J."/>
            <person name="Larimer F."/>
            <person name="Land M."/>
            <person name="Hauser L."/>
            <person name="Kyrpides N."/>
            <person name="Mikhailova N."/>
            <person name="Cozen A.E."/>
            <person name="Fitz-Gibbon S.T."/>
            <person name="House C.H."/>
            <person name="Saltikov C."/>
            <person name="Lowe T."/>
            <person name="Richardson P."/>
        </authorList>
    </citation>
    <scope>NUCLEOTIDE SEQUENCE [LARGE SCALE GENOMIC DNA]</scope>
    <source>
        <strain>DSM 4184 / JCM 9189 / GEO3</strain>
    </source>
</reference>
<gene>
    <name evidence="1" type="primary">glyA</name>
    <name type="ordered locus">Pisl_1090</name>
</gene>
<feature type="chain" id="PRO_0000369975" description="Serine hydroxymethyltransferase">
    <location>
        <begin position="1"/>
        <end position="430"/>
    </location>
</feature>
<feature type="binding site" evidence="1">
    <location>
        <begin position="120"/>
        <end position="122"/>
    </location>
    <ligand>
        <name>(6S)-5,6,7,8-tetrahydrofolate</name>
        <dbReference type="ChEBI" id="CHEBI:57453"/>
    </ligand>
</feature>
<feature type="site" description="Plays an important role in substrate specificity" evidence="1">
    <location>
        <position position="225"/>
    </location>
</feature>
<feature type="modified residue" description="N6-(pyridoxal phosphate)lysine" evidence="1">
    <location>
        <position position="226"/>
    </location>
</feature>
<name>GLYA_PYRIL</name>
<evidence type="ECO:0000255" key="1">
    <source>
        <dbReference type="HAMAP-Rule" id="MF_00051"/>
    </source>
</evidence>
<dbReference type="EC" id="2.1.2.-" evidence="1"/>
<dbReference type="EMBL" id="CP000504">
    <property type="protein sequence ID" value="ABL88262.1"/>
    <property type="molecule type" value="Genomic_DNA"/>
</dbReference>
<dbReference type="RefSeq" id="WP_011762837.1">
    <property type="nucleotide sequence ID" value="NC_008701.1"/>
</dbReference>
<dbReference type="SMR" id="A1RTI0"/>
<dbReference type="STRING" id="384616.Pisl_1090"/>
<dbReference type="GeneID" id="4617230"/>
<dbReference type="KEGG" id="pis:Pisl_1090"/>
<dbReference type="eggNOG" id="arCOG00070">
    <property type="taxonomic scope" value="Archaea"/>
</dbReference>
<dbReference type="HOGENOM" id="CLU_022477_2_1_2"/>
<dbReference type="OrthoDB" id="5821at2157"/>
<dbReference type="UniPathway" id="UPA00288">
    <property type="reaction ID" value="UER01023"/>
</dbReference>
<dbReference type="Proteomes" id="UP000002595">
    <property type="component" value="Chromosome"/>
</dbReference>
<dbReference type="GO" id="GO:0005737">
    <property type="term" value="C:cytoplasm"/>
    <property type="evidence" value="ECO:0007669"/>
    <property type="project" value="UniProtKB-SubCell"/>
</dbReference>
<dbReference type="GO" id="GO:0004372">
    <property type="term" value="F:glycine hydroxymethyltransferase activity"/>
    <property type="evidence" value="ECO:0007669"/>
    <property type="project" value="UniProtKB-UniRule"/>
</dbReference>
<dbReference type="GO" id="GO:0030170">
    <property type="term" value="F:pyridoxal phosphate binding"/>
    <property type="evidence" value="ECO:0007669"/>
    <property type="project" value="UniProtKB-UniRule"/>
</dbReference>
<dbReference type="GO" id="GO:0019264">
    <property type="term" value="P:glycine biosynthetic process from serine"/>
    <property type="evidence" value="ECO:0007669"/>
    <property type="project" value="UniProtKB-UniRule"/>
</dbReference>
<dbReference type="GO" id="GO:0035999">
    <property type="term" value="P:tetrahydrofolate interconversion"/>
    <property type="evidence" value="ECO:0007669"/>
    <property type="project" value="InterPro"/>
</dbReference>
<dbReference type="CDD" id="cd00378">
    <property type="entry name" value="SHMT"/>
    <property type="match status" value="1"/>
</dbReference>
<dbReference type="FunFam" id="3.40.640.10:FF:000101">
    <property type="entry name" value="Serine hydroxymethyltransferase"/>
    <property type="match status" value="1"/>
</dbReference>
<dbReference type="FunFam" id="3.90.1150.10:FF:000114">
    <property type="entry name" value="Serine hydroxymethyltransferase"/>
    <property type="match status" value="1"/>
</dbReference>
<dbReference type="Gene3D" id="3.90.1150.10">
    <property type="entry name" value="Aspartate Aminotransferase, domain 1"/>
    <property type="match status" value="1"/>
</dbReference>
<dbReference type="Gene3D" id="3.40.640.10">
    <property type="entry name" value="Type I PLP-dependent aspartate aminotransferase-like (Major domain)"/>
    <property type="match status" value="1"/>
</dbReference>
<dbReference type="HAMAP" id="MF_00051">
    <property type="entry name" value="SHMT"/>
    <property type="match status" value="1"/>
</dbReference>
<dbReference type="InterPro" id="IPR015424">
    <property type="entry name" value="PyrdxlP-dep_Trfase"/>
</dbReference>
<dbReference type="InterPro" id="IPR015421">
    <property type="entry name" value="PyrdxlP-dep_Trfase_major"/>
</dbReference>
<dbReference type="InterPro" id="IPR015422">
    <property type="entry name" value="PyrdxlP-dep_Trfase_small"/>
</dbReference>
<dbReference type="InterPro" id="IPR001085">
    <property type="entry name" value="Ser_HO-MeTrfase"/>
</dbReference>
<dbReference type="InterPro" id="IPR049943">
    <property type="entry name" value="Ser_HO-MeTrfase-like"/>
</dbReference>
<dbReference type="InterPro" id="IPR019798">
    <property type="entry name" value="Ser_HO-MeTrfase_PLP_BS"/>
</dbReference>
<dbReference type="InterPro" id="IPR039429">
    <property type="entry name" value="SHMT-like_dom"/>
</dbReference>
<dbReference type="NCBIfam" id="NF000586">
    <property type="entry name" value="PRK00011.1"/>
    <property type="match status" value="1"/>
</dbReference>
<dbReference type="PANTHER" id="PTHR11680">
    <property type="entry name" value="SERINE HYDROXYMETHYLTRANSFERASE"/>
    <property type="match status" value="1"/>
</dbReference>
<dbReference type="PANTHER" id="PTHR11680:SF35">
    <property type="entry name" value="SERINE HYDROXYMETHYLTRANSFERASE 1"/>
    <property type="match status" value="1"/>
</dbReference>
<dbReference type="Pfam" id="PF00464">
    <property type="entry name" value="SHMT"/>
    <property type="match status" value="1"/>
</dbReference>
<dbReference type="PIRSF" id="PIRSF000412">
    <property type="entry name" value="SHMT"/>
    <property type="match status" value="1"/>
</dbReference>
<dbReference type="SUPFAM" id="SSF53383">
    <property type="entry name" value="PLP-dependent transferases"/>
    <property type="match status" value="1"/>
</dbReference>
<dbReference type="PROSITE" id="PS00096">
    <property type="entry name" value="SHMT"/>
    <property type="match status" value="1"/>
</dbReference>
<accession>A1RTI0</accession>
<comment type="function">
    <text evidence="1">Catalyzes the reversible interconversion of serine and glycine with a modified folate serving as the one-carbon carrier. Also exhibits a pteridine-independent aldolase activity toward beta-hydroxyamino acids, producing glycine and aldehydes, via a retro-aldol mechanism.</text>
</comment>
<comment type="cofactor">
    <cofactor evidence="1">
        <name>pyridoxal 5'-phosphate</name>
        <dbReference type="ChEBI" id="CHEBI:597326"/>
    </cofactor>
</comment>
<comment type="pathway">
    <text evidence="1">Amino-acid biosynthesis; glycine biosynthesis; glycine from L-serine: step 1/1.</text>
</comment>
<comment type="subunit">
    <text evidence="1">Homodimer.</text>
</comment>
<comment type="subcellular location">
    <subcellularLocation>
        <location evidence="1">Cytoplasm</location>
    </subcellularLocation>
</comment>
<comment type="similarity">
    <text evidence="1">Belongs to the SHMT family.</text>
</comment>